<feature type="chain" id="PRO_1000089193" description="Endoribonuclease YbeY">
    <location>
        <begin position="1"/>
        <end position="178"/>
    </location>
</feature>
<feature type="region of interest" description="Disordered" evidence="2">
    <location>
        <begin position="156"/>
        <end position="178"/>
    </location>
</feature>
<feature type="compositionally biased region" description="Basic and acidic residues" evidence="2">
    <location>
        <begin position="159"/>
        <end position="178"/>
    </location>
</feature>
<feature type="binding site" evidence="1">
    <location>
        <position position="118"/>
    </location>
    <ligand>
        <name>Zn(2+)</name>
        <dbReference type="ChEBI" id="CHEBI:29105"/>
        <note>catalytic</note>
    </ligand>
</feature>
<feature type="binding site" evidence="1">
    <location>
        <position position="122"/>
    </location>
    <ligand>
        <name>Zn(2+)</name>
        <dbReference type="ChEBI" id="CHEBI:29105"/>
        <note>catalytic</note>
    </ligand>
</feature>
<feature type="binding site" evidence="1">
    <location>
        <position position="128"/>
    </location>
    <ligand>
        <name>Zn(2+)</name>
        <dbReference type="ChEBI" id="CHEBI:29105"/>
        <note>catalytic</note>
    </ligand>
</feature>
<dbReference type="EC" id="3.1.-.-" evidence="1"/>
<dbReference type="EMBL" id="CP000854">
    <property type="protein sequence ID" value="ACC42093.1"/>
    <property type="molecule type" value="Genomic_DNA"/>
</dbReference>
<dbReference type="RefSeq" id="WP_011741360.1">
    <property type="nucleotide sequence ID" value="NC_010612.1"/>
</dbReference>
<dbReference type="SMR" id="B2HLB7"/>
<dbReference type="STRING" id="216594.MMAR_3677"/>
<dbReference type="GeneID" id="34341940"/>
<dbReference type="GeneID" id="93438022"/>
<dbReference type="KEGG" id="mmi:MMAR_3677"/>
<dbReference type="eggNOG" id="COG0319">
    <property type="taxonomic scope" value="Bacteria"/>
</dbReference>
<dbReference type="HOGENOM" id="CLU_106710_3_2_11"/>
<dbReference type="OrthoDB" id="9807740at2"/>
<dbReference type="Proteomes" id="UP000001190">
    <property type="component" value="Chromosome"/>
</dbReference>
<dbReference type="GO" id="GO:0005737">
    <property type="term" value="C:cytoplasm"/>
    <property type="evidence" value="ECO:0007669"/>
    <property type="project" value="UniProtKB-SubCell"/>
</dbReference>
<dbReference type="GO" id="GO:0004222">
    <property type="term" value="F:metalloendopeptidase activity"/>
    <property type="evidence" value="ECO:0007669"/>
    <property type="project" value="InterPro"/>
</dbReference>
<dbReference type="GO" id="GO:0004521">
    <property type="term" value="F:RNA endonuclease activity"/>
    <property type="evidence" value="ECO:0007669"/>
    <property type="project" value="UniProtKB-UniRule"/>
</dbReference>
<dbReference type="GO" id="GO:0008270">
    <property type="term" value="F:zinc ion binding"/>
    <property type="evidence" value="ECO:0007669"/>
    <property type="project" value="UniProtKB-UniRule"/>
</dbReference>
<dbReference type="GO" id="GO:0006364">
    <property type="term" value="P:rRNA processing"/>
    <property type="evidence" value="ECO:0007669"/>
    <property type="project" value="UniProtKB-UniRule"/>
</dbReference>
<dbReference type="Gene3D" id="3.40.390.30">
    <property type="entry name" value="Metalloproteases ('zincins'), catalytic domain"/>
    <property type="match status" value="1"/>
</dbReference>
<dbReference type="HAMAP" id="MF_00009">
    <property type="entry name" value="Endoribonucl_YbeY"/>
    <property type="match status" value="1"/>
</dbReference>
<dbReference type="InterPro" id="IPR023091">
    <property type="entry name" value="MetalPrtase_cat_dom_sf_prd"/>
</dbReference>
<dbReference type="InterPro" id="IPR002036">
    <property type="entry name" value="YbeY"/>
</dbReference>
<dbReference type="InterPro" id="IPR020549">
    <property type="entry name" value="YbeY_CS"/>
</dbReference>
<dbReference type="NCBIfam" id="TIGR00043">
    <property type="entry name" value="rRNA maturation RNase YbeY"/>
    <property type="match status" value="1"/>
</dbReference>
<dbReference type="PANTHER" id="PTHR46986">
    <property type="entry name" value="ENDORIBONUCLEASE YBEY, CHLOROPLASTIC"/>
    <property type="match status" value="1"/>
</dbReference>
<dbReference type="PANTHER" id="PTHR46986:SF1">
    <property type="entry name" value="ENDORIBONUCLEASE YBEY, CHLOROPLASTIC"/>
    <property type="match status" value="1"/>
</dbReference>
<dbReference type="Pfam" id="PF02130">
    <property type="entry name" value="YbeY"/>
    <property type="match status" value="1"/>
</dbReference>
<dbReference type="SUPFAM" id="SSF55486">
    <property type="entry name" value="Metalloproteases ('zincins'), catalytic domain"/>
    <property type="match status" value="1"/>
</dbReference>
<dbReference type="PROSITE" id="PS01306">
    <property type="entry name" value="UPF0054"/>
    <property type="match status" value="1"/>
</dbReference>
<reference key="1">
    <citation type="journal article" date="2008" name="Genome Res.">
        <title>Insights from the complete genome sequence of Mycobacterium marinum on the evolution of Mycobacterium tuberculosis.</title>
        <authorList>
            <person name="Stinear T.P."/>
            <person name="Seemann T."/>
            <person name="Harrison P.F."/>
            <person name="Jenkin G.A."/>
            <person name="Davies J.K."/>
            <person name="Johnson P.D."/>
            <person name="Abdellah Z."/>
            <person name="Arrowsmith C."/>
            <person name="Chillingworth T."/>
            <person name="Churcher C."/>
            <person name="Clarke K."/>
            <person name="Cronin A."/>
            <person name="Davis P."/>
            <person name="Goodhead I."/>
            <person name="Holroyd N."/>
            <person name="Jagels K."/>
            <person name="Lord A."/>
            <person name="Moule S."/>
            <person name="Mungall K."/>
            <person name="Norbertczak H."/>
            <person name="Quail M.A."/>
            <person name="Rabbinowitsch E."/>
            <person name="Walker D."/>
            <person name="White B."/>
            <person name="Whitehead S."/>
            <person name="Small P.L."/>
            <person name="Brosch R."/>
            <person name="Ramakrishnan L."/>
            <person name="Fischbach M.A."/>
            <person name="Parkhill J."/>
            <person name="Cole S.T."/>
        </authorList>
    </citation>
    <scope>NUCLEOTIDE SEQUENCE [LARGE SCALE GENOMIC DNA]</scope>
    <source>
        <strain>ATCC BAA-535 / M</strain>
    </source>
</reference>
<proteinExistence type="inferred from homology"/>
<keyword id="KW-0963">Cytoplasm</keyword>
<keyword id="KW-0255">Endonuclease</keyword>
<keyword id="KW-0378">Hydrolase</keyword>
<keyword id="KW-0479">Metal-binding</keyword>
<keyword id="KW-0540">Nuclease</keyword>
<keyword id="KW-1185">Reference proteome</keyword>
<keyword id="KW-0690">Ribosome biogenesis</keyword>
<keyword id="KW-0698">rRNA processing</keyword>
<keyword id="KW-0862">Zinc</keyword>
<protein>
    <recommendedName>
        <fullName evidence="1">Endoribonuclease YbeY</fullName>
        <ecNumber evidence="1">3.1.-.-</ecNumber>
    </recommendedName>
</protein>
<comment type="function">
    <text evidence="1">Single strand-specific metallo-endoribonuclease involved in late-stage 70S ribosome quality control and in maturation of the 3' terminus of the 16S rRNA.</text>
</comment>
<comment type="cofactor">
    <cofactor evidence="1">
        <name>Zn(2+)</name>
        <dbReference type="ChEBI" id="CHEBI:29105"/>
    </cofactor>
    <text evidence="1">Binds 1 zinc ion.</text>
</comment>
<comment type="subcellular location">
    <subcellularLocation>
        <location evidence="1">Cytoplasm</location>
    </subcellularLocation>
</comment>
<comment type="similarity">
    <text evidence="1">Belongs to the endoribonuclease YbeY family.</text>
</comment>
<gene>
    <name evidence="1" type="primary">ybeY</name>
    <name type="ordered locus">MMAR_3677</name>
</gene>
<organism>
    <name type="scientific">Mycobacterium marinum (strain ATCC BAA-535 / M)</name>
    <dbReference type="NCBI Taxonomy" id="216594"/>
    <lineage>
        <taxon>Bacteria</taxon>
        <taxon>Bacillati</taxon>
        <taxon>Actinomycetota</taxon>
        <taxon>Actinomycetes</taxon>
        <taxon>Mycobacteriales</taxon>
        <taxon>Mycobacteriaceae</taxon>
        <taxon>Mycobacterium</taxon>
        <taxon>Mycobacterium ulcerans group</taxon>
    </lineage>
</organism>
<evidence type="ECO:0000255" key="1">
    <source>
        <dbReference type="HAMAP-Rule" id="MF_00009"/>
    </source>
</evidence>
<evidence type="ECO:0000256" key="2">
    <source>
        <dbReference type="SAM" id="MobiDB-lite"/>
    </source>
</evidence>
<sequence length="178" mass="19743">MSIEVSNESGIDVSETELVSVARFVIGKMDVNPGAELSMVLLDTAAMADLHMRWMDLPGPTDVMSFPMDELEPGGRPDAPEPGPAMLGDIVLCPEFAAEQAAAAGHSLGHELALLTIHGVLHLLGYDHGEPDEEKEMFALQDRLLEEWVAEQVQAYQQDRQDERDRRLLDKSRYFDEP</sequence>
<name>YBEY_MYCMM</name>
<accession>B2HLB7</accession>